<name>FTHS_STRP7</name>
<sequence length="556" mass="59614">MKTDIEIAQSIELKPIVDVVEKLGISYDDLELYGKYKAKLSFDKIRAVESNPVGKLILVTAINPTPAGEGKSTLTIGLADALNKIGKKTMIAIREPSLGPVMGIKGGAAGGGYAQVLPMEDINLHFTGDMHAITTANNALSALIDNHLHQGNELGIDQRRILWKRVVDLNDRALRHVTVGLGGPLNGIPREDGFDITVASEIMAILCLATDIEDLKRRLANIVIGYRYDRTPVSVGDLQVEGALALILKDAIKPNLVQTIYGTPAFVHGGPFANIAHGCNSVLATTTALHLADYTVTEAGFGADLGAEKFLDIKTPNLPTSPDAVVIVATLRALKMNGGVAKDALTEENVEAVRAGFANLKRHVENIRKFGIPAVVAINEFVSDTEAEIAVLKELCASIDVPVELASVWADGAEGGVALAETVVKTIAENPANYKRLYDNDLSVQEKIEKIVTEIYRGSKVNFEKKAQTQIAQIVQNGWDKLPICMAKTQYSFSDNPNALGAPENFEITIRELVPKLGAGFIVALTGDVMTMPGLPKRPAALNMDVESDGTVLGLF</sequence>
<protein>
    <recommendedName>
        <fullName evidence="1">Formate--tetrahydrofolate ligase</fullName>
        <ecNumber evidence="1">6.3.4.3</ecNumber>
    </recommendedName>
    <alternativeName>
        <fullName evidence="1">Formyltetrahydrofolate synthetase</fullName>
        <shortName evidence="1">FHS</shortName>
        <shortName evidence="1">FTHFS</shortName>
    </alternativeName>
</protein>
<organism>
    <name type="scientific">Streptococcus pneumoniae (strain 70585)</name>
    <dbReference type="NCBI Taxonomy" id="488221"/>
    <lineage>
        <taxon>Bacteria</taxon>
        <taxon>Bacillati</taxon>
        <taxon>Bacillota</taxon>
        <taxon>Bacilli</taxon>
        <taxon>Lactobacillales</taxon>
        <taxon>Streptococcaceae</taxon>
        <taxon>Streptococcus</taxon>
    </lineage>
</organism>
<proteinExistence type="inferred from homology"/>
<evidence type="ECO:0000255" key="1">
    <source>
        <dbReference type="HAMAP-Rule" id="MF_01543"/>
    </source>
</evidence>
<accession>C1C7J4</accession>
<reference key="1">
    <citation type="journal article" date="2010" name="Genome Biol.">
        <title>Structure and dynamics of the pan-genome of Streptococcus pneumoniae and closely related species.</title>
        <authorList>
            <person name="Donati C."/>
            <person name="Hiller N.L."/>
            <person name="Tettelin H."/>
            <person name="Muzzi A."/>
            <person name="Croucher N.J."/>
            <person name="Angiuoli S.V."/>
            <person name="Oggioni M."/>
            <person name="Dunning Hotopp J.C."/>
            <person name="Hu F.Z."/>
            <person name="Riley D.R."/>
            <person name="Covacci A."/>
            <person name="Mitchell T.J."/>
            <person name="Bentley S.D."/>
            <person name="Kilian M."/>
            <person name="Ehrlich G.D."/>
            <person name="Rappuoli R."/>
            <person name="Moxon E.R."/>
            <person name="Masignani V."/>
        </authorList>
    </citation>
    <scope>NUCLEOTIDE SEQUENCE [LARGE SCALE GENOMIC DNA]</scope>
    <source>
        <strain>70585</strain>
    </source>
</reference>
<feature type="chain" id="PRO_1000185265" description="Formate--tetrahydrofolate ligase">
    <location>
        <begin position="1"/>
        <end position="556"/>
    </location>
</feature>
<feature type="binding site" evidence="1">
    <location>
        <begin position="65"/>
        <end position="72"/>
    </location>
    <ligand>
        <name>ATP</name>
        <dbReference type="ChEBI" id="CHEBI:30616"/>
    </ligand>
</feature>
<dbReference type="EC" id="6.3.4.3" evidence="1"/>
<dbReference type="EMBL" id="CP000918">
    <property type="protein sequence ID" value="ACO15951.1"/>
    <property type="molecule type" value="Genomic_DNA"/>
</dbReference>
<dbReference type="RefSeq" id="WP_000845290.1">
    <property type="nucleotide sequence ID" value="NC_012468.1"/>
</dbReference>
<dbReference type="SMR" id="C1C7J4"/>
<dbReference type="KEGG" id="snm:SP70585_1275"/>
<dbReference type="HOGENOM" id="CLU_003601_3_3_9"/>
<dbReference type="UniPathway" id="UPA00193"/>
<dbReference type="Proteomes" id="UP000002211">
    <property type="component" value="Chromosome"/>
</dbReference>
<dbReference type="GO" id="GO:0005524">
    <property type="term" value="F:ATP binding"/>
    <property type="evidence" value="ECO:0007669"/>
    <property type="project" value="UniProtKB-UniRule"/>
</dbReference>
<dbReference type="GO" id="GO:0004329">
    <property type="term" value="F:formate-tetrahydrofolate ligase activity"/>
    <property type="evidence" value="ECO:0007669"/>
    <property type="project" value="UniProtKB-UniRule"/>
</dbReference>
<dbReference type="GO" id="GO:0035999">
    <property type="term" value="P:tetrahydrofolate interconversion"/>
    <property type="evidence" value="ECO:0007669"/>
    <property type="project" value="UniProtKB-UniRule"/>
</dbReference>
<dbReference type="CDD" id="cd00477">
    <property type="entry name" value="FTHFS"/>
    <property type="match status" value="1"/>
</dbReference>
<dbReference type="FunFam" id="3.30.1510.10:FF:000001">
    <property type="entry name" value="Formate--tetrahydrofolate ligase"/>
    <property type="match status" value="1"/>
</dbReference>
<dbReference type="FunFam" id="3.10.410.10:FF:000001">
    <property type="entry name" value="Putative formate--tetrahydrofolate ligase"/>
    <property type="match status" value="1"/>
</dbReference>
<dbReference type="Gene3D" id="3.30.1510.10">
    <property type="entry name" value="Domain 2, N(10)-formyltetrahydrofolate synthetase"/>
    <property type="match status" value="1"/>
</dbReference>
<dbReference type="Gene3D" id="3.10.410.10">
    <property type="entry name" value="Formyltetrahydrofolate synthetase, domain 3"/>
    <property type="match status" value="1"/>
</dbReference>
<dbReference type="Gene3D" id="3.40.50.300">
    <property type="entry name" value="P-loop containing nucleotide triphosphate hydrolases"/>
    <property type="match status" value="1"/>
</dbReference>
<dbReference type="HAMAP" id="MF_01543">
    <property type="entry name" value="FTHFS"/>
    <property type="match status" value="1"/>
</dbReference>
<dbReference type="InterPro" id="IPR000559">
    <property type="entry name" value="Formate_THF_ligase"/>
</dbReference>
<dbReference type="InterPro" id="IPR020628">
    <property type="entry name" value="Formate_THF_ligase_CS"/>
</dbReference>
<dbReference type="InterPro" id="IPR027417">
    <property type="entry name" value="P-loop_NTPase"/>
</dbReference>
<dbReference type="NCBIfam" id="NF010030">
    <property type="entry name" value="PRK13505.1"/>
    <property type="match status" value="1"/>
</dbReference>
<dbReference type="Pfam" id="PF01268">
    <property type="entry name" value="FTHFS"/>
    <property type="match status" value="1"/>
</dbReference>
<dbReference type="SUPFAM" id="SSF52540">
    <property type="entry name" value="P-loop containing nucleoside triphosphate hydrolases"/>
    <property type="match status" value="1"/>
</dbReference>
<dbReference type="PROSITE" id="PS00721">
    <property type="entry name" value="FTHFS_1"/>
    <property type="match status" value="1"/>
</dbReference>
<dbReference type="PROSITE" id="PS00722">
    <property type="entry name" value="FTHFS_2"/>
    <property type="match status" value="1"/>
</dbReference>
<comment type="catalytic activity">
    <reaction evidence="1">
        <text>(6S)-5,6,7,8-tetrahydrofolate + formate + ATP = (6R)-10-formyltetrahydrofolate + ADP + phosphate</text>
        <dbReference type="Rhea" id="RHEA:20221"/>
        <dbReference type="ChEBI" id="CHEBI:15740"/>
        <dbReference type="ChEBI" id="CHEBI:30616"/>
        <dbReference type="ChEBI" id="CHEBI:43474"/>
        <dbReference type="ChEBI" id="CHEBI:57453"/>
        <dbReference type="ChEBI" id="CHEBI:195366"/>
        <dbReference type="ChEBI" id="CHEBI:456216"/>
        <dbReference type="EC" id="6.3.4.3"/>
    </reaction>
</comment>
<comment type="pathway">
    <text evidence="1">One-carbon metabolism; tetrahydrofolate interconversion.</text>
</comment>
<comment type="similarity">
    <text evidence="1">Belongs to the formate--tetrahydrofolate ligase family.</text>
</comment>
<gene>
    <name evidence="1" type="primary">fhs</name>
    <name type="ordered locus">SP70585_1275</name>
</gene>
<keyword id="KW-0067">ATP-binding</keyword>
<keyword id="KW-0436">Ligase</keyword>
<keyword id="KW-0547">Nucleotide-binding</keyword>
<keyword id="KW-0554">One-carbon metabolism</keyword>